<organism>
    <name type="scientific">Arabidopsis thaliana</name>
    <name type="common">Mouse-ear cress</name>
    <dbReference type="NCBI Taxonomy" id="3702"/>
    <lineage>
        <taxon>Eukaryota</taxon>
        <taxon>Viridiplantae</taxon>
        <taxon>Streptophyta</taxon>
        <taxon>Embryophyta</taxon>
        <taxon>Tracheophyta</taxon>
        <taxon>Spermatophyta</taxon>
        <taxon>Magnoliopsida</taxon>
        <taxon>eudicotyledons</taxon>
        <taxon>Gunneridae</taxon>
        <taxon>Pentapetalae</taxon>
        <taxon>rosids</taxon>
        <taxon>malvids</taxon>
        <taxon>Brassicales</taxon>
        <taxon>Brassicaceae</taxon>
        <taxon>Camelineae</taxon>
        <taxon>Arabidopsis</taxon>
    </lineage>
</organism>
<keyword id="KW-0067">ATP-binding</keyword>
<keyword id="KW-0347">Helicase</keyword>
<keyword id="KW-0378">Hydrolase</keyword>
<keyword id="KW-0547">Nucleotide-binding</keyword>
<keyword id="KW-0539">Nucleus</keyword>
<keyword id="KW-1185">Reference proteome</keyword>
<reference key="1">
    <citation type="journal article" date="2000" name="Nature">
        <title>Sequence and analysis of chromosome 5 of the plant Arabidopsis thaliana.</title>
        <authorList>
            <person name="Tabata S."/>
            <person name="Kaneko T."/>
            <person name="Nakamura Y."/>
            <person name="Kotani H."/>
            <person name="Kato T."/>
            <person name="Asamizu E."/>
            <person name="Miyajima N."/>
            <person name="Sasamoto S."/>
            <person name="Kimura T."/>
            <person name="Hosouchi T."/>
            <person name="Kawashima K."/>
            <person name="Kohara M."/>
            <person name="Matsumoto M."/>
            <person name="Matsuno A."/>
            <person name="Muraki A."/>
            <person name="Nakayama S."/>
            <person name="Nakazaki N."/>
            <person name="Naruo K."/>
            <person name="Okumura S."/>
            <person name="Shinpo S."/>
            <person name="Takeuchi C."/>
            <person name="Wada T."/>
            <person name="Watanabe A."/>
            <person name="Yamada M."/>
            <person name="Yasuda M."/>
            <person name="Sato S."/>
            <person name="de la Bastide M."/>
            <person name="Huang E."/>
            <person name="Spiegel L."/>
            <person name="Gnoj L."/>
            <person name="O'Shaughnessy A."/>
            <person name="Preston R."/>
            <person name="Habermann K."/>
            <person name="Murray J."/>
            <person name="Johnson D."/>
            <person name="Rohlfing T."/>
            <person name="Nelson J."/>
            <person name="Stoneking T."/>
            <person name="Pepin K."/>
            <person name="Spieth J."/>
            <person name="Sekhon M."/>
            <person name="Armstrong J."/>
            <person name="Becker M."/>
            <person name="Belter E."/>
            <person name="Cordum H."/>
            <person name="Cordes M."/>
            <person name="Courtney L."/>
            <person name="Courtney W."/>
            <person name="Dante M."/>
            <person name="Du H."/>
            <person name="Edwards J."/>
            <person name="Fryman J."/>
            <person name="Haakensen B."/>
            <person name="Lamar E."/>
            <person name="Latreille P."/>
            <person name="Leonard S."/>
            <person name="Meyer R."/>
            <person name="Mulvaney E."/>
            <person name="Ozersky P."/>
            <person name="Riley A."/>
            <person name="Strowmatt C."/>
            <person name="Wagner-McPherson C."/>
            <person name="Wollam A."/>
            <person name="Yoakum M."/>
            <person name="Bell M."/>
            <person name="Dedhia N."/>
            <person name="Parnell L."/>
            <person name="Shah R."/>
            <person name="Rodriguez M."/>
            <person name="Hoon See L."/>
            <person name="Vil D."/>
            <person name="Baker J."/>
            <person name="Kirchoff K."/>
            <person name="Toth K."/>
            <person name="King L."/>
            <person name="Bahret A."/>
            <person name="Miller B."/>
            <person name="Marra M.A."/>
            <person name="Martienssen R."/>
            <person name="McCombie W.R."/>
            <person name="Wilson R.K."/>
            <person name="Murphy G."/>
            <person name="Bancroft I."/>
            <person name="Volckaert G."/>
            <person name="Wambutt R."/>
            <person name="Duesterhoeft A."/>
            <person name="Stiekema W."/>
            <person name="Pohl T."/>
            <person name="Entian K.-D."/>
            <person name="Terryn N."/>
            <person name="Hartley N."/>
            <person name="Bent E."/>
            <person name="Johnson S."/>
            <person name="Langham S.-A."/>
            <person name="McCullagh B."/>
            <person name="Robben J."/>
            <person name="Grymonprez B."/>
            <person name="Zimmermann W."/>
            <person name="Ramsperger U."/>
            <person name="Wedler H."/>
            <person name="Balke K."/>
            <person name="Wedler E."/>
            <person name="Peters S."/>
            <person name="van Staveren M."/>
            <person name="Dirkse W."/>
            <person name="Mooijman P."/>
            <person name="Klein Lankhorst R."/>
            <person name="Weitzenegger T."/>
            <person name="Bothe G."/>
            <person name="Rose M."/>
            <person name="Hauf J."/>
            <person name="Berneiser S."/>
            <person name="Hempel S."/>
            <person name="Feldpausch M."/>
            <person name="Lamberth S."/>
            <person name="Villarroel R."/>
            <person name="Gielen J."/>
            <person name="Ardiles W."/>
            <person name="Bents O."/>
            <person name="Lemcke K."/>
            <person name="Kolesov G."/>
            <person name="Mayer K.F.X."/>
            <person name="Rudd S."/>
            <person name="Schoof H."/>
            <person name="Schueller C."/>
            <person name="Zaccaria P."/>
            <person name="Mewes H.-W."/>
            <person name="Bevan M."/>
            <person name="Fransz P.F."/>
        </authorList>
    </citation>
    <scope>NUCLEOTIDE SEQUENCE [LARGE SCALE GENOMIC DNA]</scope>
    <source>
        <strain>cv. Columbia</strain>
    </source>
</reference>
<reference key="2">
    <citation type="journal article" date="2017" name="Plant J.">
        <title>Araport11: a complete reannotation of the Arabidopsis thaliana reference genome.</title>
        <authorList>
            <person name="Cheng C.Y."/>
            <person name="Krishnakumar V."/>
            <person name="Chan A.P."/>
            <person name="Thibaud-Nissen F."/>
            <person name="Schobel S."/>
            <person name="Town C.D."/>
        </authorList>
    </citation>
    <scope>GENOME REANNOTATION</scope>
    <source>
        <strain>cv. Columbia</strain>
    </source>
</reference>
<reference key="3">
    <citation type="journal article" date="2007" name="Plant Cell">
        <title>An SNF2 protein associated with nuclear RNA silencing and the spread of a silencing signal between cells in Arabidopsis.</title>
        <authorList>
            <person name="Smith L.M."/>
            <person name="Pontes O."/>
            <person name="Searle I."/>
            <person name="Yelina N."/>
            <person name="Yousafzai F.K."/>
            <person name="Herr A.J."/>
            <person name="Pikaard C.S."/>
            <person name="Baulcombe D.C."/>
        </authorList>
    </citation>
    <scope>IDENTIFICATION</scope>
    <scope>GENE FAMILY</scope>
    <scope>NOMENCLATURE</scope>
</reference>
<reference key="4">
    <citation type="journal article" date="2011" name="PLoS Genet.">
        <title>SHH1, a homeodomain protein required for DNA methylation, as well as RDR2, RDM4, and chromatin remodeling factors, associate with RNA polymerase IV.</title>
        <authorList>
            <person name="Law J.A."/>
            <person name="Vashisht A.A."/>
            <person name="Wohlschlegel J.A."/>
            <person name="Jacobsen S.E."/>
        </authorList>
    </citation>
    <scope>IDENTIFICATION BY MASS SPECTROMETRY</scope>
    <scope>INTERACTION WITH NRPD1</scope>
</reference>
<reference key="5">
    <citation type="journal article" date="2013" name="PLoS ONE">
        <title>Genome-wide comparative in silico analysis of the RNA helicase gene family in Zea mays and Glycine max: a comparison with Arabidopsis and Oryza sativa.</title>
        <authorList>
            <person name="Xu R."/>
            <person name="Zhang S."/>
            <person name="Huang J."/>
            <person name="Zheng C."/>
        </authorList>
    </citation>
    <scope>GENE FAMILY</scope>
</reference>
<reference key="6">
    <citation type="journal article" date="2013" name="Proc. Natl. Acad. Sci. U.S.A.">
        <title>DTF1 is a core component of RNA-directed DNA methylation and may assist in the recruitment of Pol IV.</title>
        <authorList>
            <person name="Zhang H."/>
            <person name="Ma Z.Y."/>
            <person name="Zeng L."/>
            <person name="Tanaka K."/>
            <person name="Zhang C.J."/>
            <person name="Ma J."/>
            <person name="Bai G."/>
            <person name="Wang P."/>
            <person name="Zhang S.W."/>
            <person name="Liu Z.W."/>
            <person name="Cai T."/>
            <person name="Tang K."/>
            <person name="Liu R."/>
            <person name="Shi X."/>
            <person name="He X.J."/>
            <person name="Zhu J.K."/>
        </authorList>
    </citation>
    <scope>IDENTIFICATION BY MASS SPECTROMETRY</scope>
    <scope>INTERACTION WITH SHH1</scope>
</reference>
<protein>
    <recommendedName>
        <fullName>SNF2 domain-containing protein CLASSY 2</fullName>
    </recommendedName>
    <alternativeName>
        <fullName>Protein CHROMATIN REMODELING 42</fullName>
    </alternativeName>
</protein>
<comment type="function">
    <text>Probable chromatin remodeling factor.</text>
</comment>
<comment type="subunit">
    <text evidence="5 6">Interacts with NRPD1 and SHH1.</text>
</comment>
<comment type="subcellular location">
    <subcellularLocation>
        <location evidence="1">Nucleus</location>
    </subcellularLocation>
</comment>
<comment type="similarity">
    <text evidence="7">Belongs to the helicase family.</text>
</comment>
<accession>F4K493</accession>
<proteinExistence type="evidence at protein level"/>
<name>CLSY2_ARATH</name>
<gene>
    <name type="primary">CLSY2</name>
    <name type="synonym">CHR42</name>
    <name type="ordered locus">At5g20420</name>
    <name type="ORF">F7C8.10</name>
</gene>
<evidence type="ECO:0000250" key="1"/>
<evidence type="ECO:0000255" key="2">
    <source>
        <dbReference type="PROSITE-ProRule" id="PRU00541"/>
    </source>
</evidence>
<evidence type="ECO:0000255" key="3">
    <source>
        <dbReference type="PROSITE-ProRule" id="PRU00542"/>
    </source>
</evidence>
<evidence type="ECO:0000256" key="4">
    <source>
        <dbReference type="SAM" id="MobiDB-lite"/>
    </source>
</evidence>
<evidence type="ECO:0000269" key="5">
    <source>
    </source>
</evidence>
<evidence type="ECO:0000269" key="6">
    <source>
    </source>
</evidence>
<evidence type="ECO:0000305" key="7"/>
<sequence length="1261" mass="145314">MKKRGFYNLKHPFDPCPFEFFCSGTWKPVEYMRIEDGMMTIRLLENGYVLEDIRPFQRLRLRSRKAALSDCICFLRPDIDVCVLYRIHEDDLEPVWVDARIVSIERKPHESECSCKINVRIYIDQGCIGSEKQRINRDSVVIGLNQISILQKFYKEQSTDQFYRWRFSEDCTSLMKTRLSLGKFLPDLSWLTVTSTLKSIVFQIRTVQTKMVYQIVTDEEGSSSTLSSMNITLEDGVSLSKVVKFNPADILDDSQDLEIKQETDYYQEEDEVVELRRSKRRNVRPDIYTGCDYEPDTIDGWVRMMPYQFGKCAVNVESDEDEDDNNEDGDTNDDLYIPLSRLFIKKKKTNSREAKPKSRKGEIVVIDKRRVHGFGRKERKSELSVIPFTPVFEPIPLEQFGLNANSFGGGGSFSRSQYFDETEKYRSKGMKYGKKMTEMEEMMEADLCWKGPNQVKSFQKRTSRSSRSVAPKTEDSDEPRVYKKVTLSAGAYNKLIDTYMNNIESTIAAKDEPTSVVDQWEELKKTNFAFKLHGDMEKNLSEDGEGETSENEMLWREMELCLASSYILDDNEVRVDNEAFEKARSGCEHDYRLEEEIGMCCRLCGHVGSEIKDVSAPFAEHKKWTIETKHIEEDDIKTKLSHKEAQTKDFSMISDSSEMLAAEESDNVWALIPKLKRKLHVHQRRAFEFLWRNVAGSVEPSLMDPTSGNIGGCVISHSPGAGKTFLIIAFLTSYLKLFPGKRPLVLAPKTTLYTWYKEFIKWEIPVPVHLIHGRRTYCTFKQNKTVQFNGVPKPSRDVMHVLDCLEKIQKWHAHPSVLVMGYTSFTTLMREDSKFAHRKYMAKVLRESPGLLVLDEGHNPRSTKSRLRKALMKVGTDLRILLSGTLFQNNFCEYFNTLCLARPKFIHEVLMELDQKFKTNHGVNKAPHLLENRARKLFLDIIAKKIDASVGDERLQGLNMLKNMTNGFIDNYEGSGSGSGDALPGLQIYTLVMNSTDIQHKILTKLQDVIKTYFGYPLEVELQITLAAIHPWLVTSSNCCTKFFNPQELSEIGKLKHDAKKGSKVMFVLNLIFRVVKREKILIFCHNIAPIRMFTELFENIFRWQRGREILTLTGDLELFERGRVIDKFEEPGNPSRVLLASITACAEGISLTAASRVIMLDSEWNPSKTKQAIARAFRPGQQKVVYVYQLLSRGTLEEDKYRRTTWKEWVSCMIFSEEFVADPSLWQAEKIEDDILREIVGEDKVKSFHMIMKNEKASTG</sequence>
<feature type="chain" id="PRO_0000423314" description="SNF2 domain-containing protein CLASSY 2">
    <location>
        <begin position="1"/>
        <end position="1261"/>
    </location>
</feature>
<feature type="domain" description="Helicase ATP-binding" evidence="2">
    <location>
        <begin position="704"/>
        <end position="904"/>
    </location>
</feature>
<feature type="domain" description="Helicase C-terminal" evidence="3">
    <location>
        <begin position="1067"/>
        <end position="1232"/>
    </location>
</feature>
<feature type="region of interest" description="Disordered" evidence="4">
    <location>
        <begin position="458"/>
        <end position="479"/>
    </location>
</feature>
<feature type="short sequence motif" description="DEAH box">
    <location>
        <begin position="855"/>
        <end position="858"/>
    </location>
</feature>
<feature type="binding site" evidence="2">
    <location>
        <begin position="717"/>
        <end position="724"/>
    </location>
    <ligand>
        <name>ATP</name>
        <dbReference type="ChEBI" id="CHEBI:30616"/>
    </ligand>
</feature>
<dbReference type="EMBL" id="AF296833">
    <property type="status" value="NOT_ANNOTATED_CDS"/>
    <property type="molecule type" value="Genomic_DNA"/>
</dbReference>
<dbReference type="EMBL" id="CP002688">
    <property type="protein sequence ID" value="AED92841.1"/>
    <property type="molecule type" value="Genomic_DNA"/>
</dbReference>
<dbReference type="RefSeq" id="NP_197542.1">
    <property type="nucleotide sequence ID" value="NM_122049.3"/>
</dbReference>
<dbReference type="BioGRID" id="17440">
    <property type="interactions" value="2"/>
</dbReference>
<dbReference type="FunCoup" id="F4K493">
    <property type="interactions" value="33"/>
</dbReference>
<dbReference type="STRING" id="3702.F4K493"/>
<dbReference type="PaxDb" id="3702-AT5G20420.1"/>
<dbReference type="ProteomicsDB" id="240893"/>
<dbReference type="EnsemblPlants" id="AT5G20420.1">
    <property type="protein sequence ID" value="AT5G20420.1"/>
    <property type="gene ID" value="AT5G20420"/>
</dbReference>
<dbReference type="GeneID" id="832164"/>
<dbReference type="Gramene" id="AT5G20420.1">
    <property type="protein sequence ID" value="AT5G20420.1"/>
    <property type="gene ID" value="AT5G20420"/>
</dbReference>
<dbReference type="KEGG" id="ath:AT5G20420"/>
<dbReference type="Araport" id="AT5G20420"/>
<dbReference type="TAIR" id="AT5G20420">
    <property type="gene designation" value="CHR42"/>
</dbReference>
<dbReference type="eggNOG" id="KOG0390">
    <property type="taxonomic scope" value="Eukaryota"/>
</dbReference>
<dbReference type="HOGENOM" id="CLU_002499_0_0_1"/>
<dbReference type="InParanoid" id="F4K493"/>
<dbReference type="OMA" id="SDQFYRW"/>
<dbReference type="PhylomeDB" id="F4K493"/>
<dbReference type="PRO" id="PR:F4K493"/>
<dbReference type="Proteomes" id="UP000006548">
    <property type="component" value="Chromosome 5"/>
</dbReference>
<dbReference type="ExpressionAtlas" id="F4K493">
    <property type="expression patterns" value="baseline and differential"/>
</dbReference>
<dbReference type="GO" id="GO:0005634">
    <property type="term" value="C:nucleus"/>
    <property type="evidence" value="ECO:0007669"/>
    <property type="project" value="UniProtKB-SubCell"/>
</dbReference>
<dbReference type="GO" id="GO:0005524">
    <property type="term" value="F:ATP binding"/>
    <property type="evidence" value="ECO:0007669"/>
    <property type="project" value="UniProtKB-KW"/>
</dbReference>
<dbReference type="GO" id="GO:0004386">
    <property type="term" value="F:helicase activity"/>
    <property type="evidence" value="ECO:0007669"/>
    <property type="project" value="UniProtKB-KW"/>
</dbReference>
<dbReference type="GO" id="GO:0016787">
    <property type="term" value="F:hydrolase activity"/>
    <property type="evidence" value="ECO:0007669"/>
    <property type="project" value="UniProtKB-KW"/>
</dbReference>
<dbReference type="GO" id="GO:0080188">
    <property type="term" value="P:gene silencing by siRNA-directed DNA methylation"/>
    <property type="evidence" value="ECO:0007669"/>
    <property type="project" value="InterPro"/>
</dbReference>
<dbReference type="CDD" id="cd18007">
    <property type="entry name" value="DEXHc_ATRX-like"/>
    <property type="match status" value="1"/>
</dbReference>
<dbReference type="CDD" id="cd18793">
    <property type="entry name" value="SF2_C_SNF"/>
    <property type="match status" value="1"/>
</dbReference>
<dbReference type="Gene3D" id="3.40.50.300">
    <property type="entry name" value="P-loop containing nucleotide triphosphate hydrolases"/>
    <property type="match status" value="1"/>
</dbReference>
<dbReference type="Gene3D" id="3.40.50.10810">
    <property type="entry name" value="Tandem AAA-ATPase domain"/>
    <property type="match status" value="1"/>
</dbReference>
<dbReference type="InterPro" id="IPR044567">
    <property type="entry name" value="CLSY/DRD1"/>
</dbReference>
<dbReference type="InterPro" id="IPR014001">
    <property type="entry name" value="Helicase_ATP-bd"/>
</dbReference>
<dbReference type="InterPro" id="IPR001650">
    <property type="entry name" value="Helicase_C-like"/>
</dbReference>
<dbReference type="InterPro" id="IPR027417">
    <property type="entry name" value="P-loop_NTPase"/>
</dbReference>
<dbReference type="InterPro" id="IPR038718">
    <property type="entry name" value="SNF2-like_sf"/>
</dbReference>
<dbReference type="InterPro" id="IPR049730">
    <property type="entry name" value="SNF2/RAD54-like_C"/>
</dbReference>
<dbReference type="InterPro" id="IPR000330">
    <property type="entry name" value="SNF2_N"/>
</dbReference>
<dbReference type="PANTHER" id="PTHR45821:SF2">
    <property type="entry name" value="SNF2 DOMAIN-CONTAINING PROTEIN CLASSY 2"/>
    <property type="match status" value="1"/>
</dbReference>
<dbReference type="PANTHER" id="PTHR45821">
    <property type="entry name" value="SNF2 DOMAIN-CONTAINING PROTEIN CLASSY 2-RELATED"/>
    <property type="match status" value="1"/>
</dbReference>
<dbReference type="Pfam" id="PF00271">
    <property type="entry name" value="Helicase_C"/>
    <property type="match status" value="1"/>
</dbReference>
<dbReference type="Pfam" id="PF00176">
    <property type="entry name" value="SNF2-rel_dom"/>
    <property type="match status" value="1"/>
</dbReference>
<dbReference type="SMART" id="SM00487">
    <property type="entry name" value="DEXDc"/>
    <property type="match status" value="1"/>
</dbReference>
<dbReference type="SMART" id="SM00490">
    <property type="entry name" value="HELICc"/>
    <property type="match status" value="1"/>
</dbReference>
<dbReference type="SUPFAM" id="SSF52540">
    <property type="entry name" value="P-loop containing nucleoside triphosphate hydrolases"/>
    <property type="match status" value="2"/>
</dbReference>
<dbReference type="PROSITE" id="PS51192">
    <property type="entry name" value="HELICASE_ATP_BIND_1"/>
    <property type="match status" value="1"/>
</dbReference>
<dbReference type="PROSITE" id="PS51194">
    <property type="entry name" value="HELICASE_CTER"/>
    <property type="match status" value="1"/>
</dbReference>